<evidence type="ECO:0000250" key="1">
    <source>
        <dbReference type="UniProtKB" id="P56757"/>
    </source>
</evidence>
<evidence type="ECO:0000255" key="2">
    <source>
        <dbReference type="HAMAP-Rule" id="MF_01346"/>
    </source>
</evidence>
<accession>A4QKR6</accession>
<organism>
    <name type="scientific">Crucihimalaya wallichii</name>
    <name type="common">Rock-cress</name>
    <name type="synonym">Arabidopsis campestris</name>
    <dbReference type="NCBI Taxonomy" id="78192"/>
    <lineage>
        <taxon>Eukaryota</taxon>
        <taxon>Viridiplantae</taxon>
        <taxon>Streptophyta</taxon>
        <taxon>Embryophyta</taxon>
        <taxon>Tracheophyta</taxon>
        <taxon>Spermatophyta</taxon>
        <taxon>Magnoliopsida</taxon>
        <taxon>eudicotyledons</taxon>
        <taxon>Gunneridae</taxon>
        <taxon>Pentapetalae</taxon>
        <taxon>rosids</taxon>
        <taxon>malvids</taxon>
        <taxon>Brassicales</taxon>
        <taxon>Brassicaceae</taxon>
        <taxon>Crucihimalayeae</taxon>
        <taxon>Crucihimalaya</taxon>
    </lineage>
</organism>
<dbReference type="EC" id="7.1.2.2" evidence="2"/>
<dbReference type="EMBL" id="AP009372">
    <property type="protein sequence ID" value="BAF50271.1"/>
    <property type="molecule type" value="Genomic_DNA"/>
</dbReference>
<dbReference type="RefSeq" id="YP_001123447.1">
    <property type="nucleotide sequence ID" value="NC_009271.1"/>
</dbReference>
<dbReference type="SMR" id="A4QKR6"/>
<dbReference type="GeneID" id="4962707"/>
<dbReference type="GO" id="GO:0009535">
    <property type="term" value="C:chloroplast thylakoid membrane"/>
    <property type="evidence" value="ECO:0007669"/>
    <property type="project" value="UniProtKB-SubCell"/>
</dbReference>
<dbReference type="GO" id="GO:0045259">
    <property type="term" value="C:proton-transporting ATP synthase complex"/>
    <property type="evidence" value="ECO:0007669"/>
    <property type="project" value="UniProtKB-KW"/>
</dbReference>
<dbReference type="GO" id="GO:0043531">
    <property type="term" value="F:ADP binding"/>
    <property type="evidence" value="ECO:0007669"/>
    <property type="project" value="TreeGrafter"/>
</dbReference>
<dbReference type="GO" id="GO:0005524">
    <property type="term" value="F:ATP binding"/>
    <property type="evidence" value="ECO:0007669"/>
    <property type="project" value="UniProtKB-UniRule"/>
</dbReference>
<dbReference type="GO" id="GO:0046933">
    <property type="term" value="F:proton-transporting ATP synthase activity, rotational mechanism"/>
    <property type="evidence" value="ECO:0007669"/>
    <property type="project" value="UniProtKB-UniRule"/>
</dbReference>
<dbReference type="CDD" id="cd18113">
    <property type="entry name" value="ATP-synt_F1_alpha_C"/>
    <property type="match status" value="1"/>
</dbReference>
<dbReference type="CDD" id="cd18116">
    <property type="entry name" value="ATP-synt_F1_alpha_N"/>
    <property type="match status" value="1"/>
</dbReference>
<dbReference type="CDD" id="cd01132">
    <property type="entry name" value="F1-ATPase_alpha_CD"/>
    <property type="match status" value="1"/>
</dbReference>
<dbReference type="FunFam" id="1.20.150.20:FF:000001">
    <property type="entry name" value="ATP synthase subunit alpha"/>
    <property type="match status" value="1"/>
</dbReference>
<dbReference type="FunFam" id="2.40.30.20:FF:000001">
    <property type="entry name" value="ATP synthase subunit alpha"/>
    <property type="match status" value="1"/>
</dbReference>
<dbReference type="FunFam" id="3.40.50.300:FF:000002">
    <property type="entry name" value="ATP synthase subunit alpha"/>
    <property type="match status" value="1"/>
</dbReference>
<dbReference type="Gene3D" id="2.40.30.20">
    <property type="match status" value="1"/>
</dbReference>
<dbReference type="Gene3D" id="1.20.150.20">
    <property type="entry name" value="ATP synthase alpha/beta chain, C-terminal domain"/>
    <property type="match status" value="1"/>
</dbReference>
<dbReference type="Gene3D" id="3.40.50.300">
    <property type="entry name" value="P-loop containing nucleotide triphosphate hydrolases"/>
    <property type="match status" value="1"/>
</dbReference>
<dbReference type="HAMAP" id="MF_01346">
    <property type="entry name" value="ATP_synth_alpha_bact"/>
    <property type="match status" value="1"/>
</dbReference>
<dbReference type="InterPro" id="IPR023366">
    <property type="entry name" value="ATP_synth_asu-like_sf"/>
</dbReference>
<dbReference type="InterPro" id="IPR000793">
    <property type="entry name" value="ATP_synth_asu_C"/>
</dbReference>
<dbReference type="InterPro" id="IPR038376">
    <property type="entry name" value="ATP_synth_asu_C_sf"/>
</dbReference>
<dbReference type="InterPro" id="IPR033732">
    <property type="entry name" value="ATP_synth_F1_a_nt-bd_dom"/>
</dbReference>
<dbReference type="InterPro" id="IPR005294">
    <property type="entry name" value="ATP_synth_F1_asu"/>
</dbReference>
<dbReference type="InterPro" id="IPR020003">
    <property type="entry name" value="ATPase_a/bsu_AS"/>
</dbReference>
<dbReference type="InterPro" id="IPR004100">
    <property type="entry name" value="ATPase_F1/V1/A1_a/bsu_N"/>
</dbReference>
<dbReference type="InterPro" id="IPR036121">
    <property type="entry name" value="ATPase_F1/V1/A1_a/bsu_N_sf"/>
</dbReference>
<dbReference type="InterPro" id="IPR000194">
    <property type="entry name" value="ATPase_F1/V1/A1_a/bsu_nucl-bd"/>
</dbReference>
<dbReference type="InterPro" id="IPR027417">
    <property type="entry name" value="P-loop_NTPase"/>
</dbReference>
<dbReference type="NCBIfam" id="TIGR00962">
    <property type="entry name" value="atpA"/>
    <property type="match status" value="1"/>
</dbReference>
<dbReference type="NCBIfam" id="NF009884">
    <property type="entry name" value="PRK13343.1"/>
    <property type="match status" value="1"/>
</dbReference>
<dbReference type="PANTHER" id="PTHR48082">
    <property type="entry name" value="ATP SYNTHASE SUBUNIT ALPHA, MITOCHONDRIAL"/>
    <property type="match status" value="1"/>
</dbReference>
<dbReference type="PANTHER" id="PTHR48082:SF2">
    <property type="entry name" value="ATP SYNTHASE SUBUNIT ALPHA, MITOCHONDRIAL"/>
    <property type="match status" value="1"/>
</dbReference>
<dbReference type="Pfam" id="PF00006">
    <property type="entry name" value="ATP-synt_ab"/>
    <property type="match status" value="1"/>
</dbReference>
<dbReference type="Pfam" id="PF00306">
    <property type="entry name" value="ATP-synt_ab_C"/>
    <property type="match status" value="1"/>
</dbReference>
<dbReference type="Pfam" id="PF02874">
    <property type="entry name" value="ATP-synt_ab_N"/>
    <property type="match status" value="1"/>
</dbReference>
<dbReference type="PIRSF" id="PIRSF039088">
    <property type="entry name" value="F_ATPase_subunit_alpha"/>
    <property type="match status" value="1"/>
</dbReference>
<dbReference type="SUPFAM" id="SSF47917">
    <property type="entry name" value="C-terminal domain of alpha and beta subunits of F1 ATP synthase"/>
    <property type="match status" value="1"/>
</dbReference>
<dbReference type="SUPFAM" id="SSF50615">
    <property type="entry name" value="N-terminal domain of alpha and beta subunits of F1 ATP synthase"/>
    <property type="match status" value="1"/>
</dbReference>
<dbReference type="SUPFAM" id="SSF52540">
    <property type="entry name" value="P-loop containing nucleoside triphosphate hydrolases"/>
    <property type="match status" value="1"/>
</dbReference>
<dbReference type="PROSITE" id="PS00152">
    <property type="entry name" value="ATPASE_ALPHA_BETA"/>
    <property type="match status" value="1"/>
</dbReference>
<geneLocation type="chloroplast"/>
<protein>
    <recommendedName>
        <fullName evidence="2">ATP synthase subunit alpha, chloroplastic</fullName>
        <ecNumber evidence="2">7.1.2.2</ecNumber>
    </recommendedName>
    <alternativeName>
        <fullName evidence="2">ATP synthase F1 sector subunit alpha</fullName>
    </alternativeName>
    <alternativeName>
        <fullName evidence="2">F-ATPase subunit alpha</fullName>
    </alternativeName>
</protein>
<feature type="chain" id="PRO_0000339079" description="ATP synthase subunit alpha, chloroplastic">
    <location>
        <begin position="1"/>
        <end position="507"/>
    </location>
</feature>
<feature type="binding site" evidence="2">
    <location>
        <begin position="170"/>
        <end position="177"/>
    </location>
    <ligand>
        <name>ATP</name>
        <dbReference type="ChEBI" id="CHEBI:30616"/>
    </ligand>
</feature>
<feature type="site" description="Required for activity" evidence="2">
    <location>
        <position position="363"/>
    </location>
</feature>
<feature type="modified residue" description="Phosphothreonine" evidence="1">
    <location>
        <position position="257"/>
    </location>
</feature>
<comment type="function">
    <text evidence="2">Produces ATP from ADP in the presence of a proton gradient across the membrane. The alpha chain is a regulatory subunit.</text>
</comment>
<comment type="catalytic activity">
    <reaction evidence="2">
        <text>ATP + H2O + 4 H(+)(in) = ADP + phosphate + 5 H(+)(out)</text>
        <dbReference type="Rhea" id="RHEA:57720"/>
        <dbReference type="ChEBI" id="CHEBI:15377"/>
        <dbReference type="ChEBI" id="CHEBI:15378"/>
        <dbReference type="ChEBI" id="CHEBI:30616"/>
        <dbReference type="ChEBI" id="CHEBI:43474"/>
        <dbReference type="ChEBI" id="CHEBI:456216"/>
        <dbReference type="EC" id="7.1.2.2"/>
    </reaction>
</comment>
<comment type="subunit">
    <text evidence="2">F-type ATPases have 2 components, CF(1) - the catalytic core - and CF(0) - the membrane proton channel. CF(1) has five subunits: alpha(3), beta(3), gamma(1), delta(1), epsilon(1). CF(0) has four main subunits: a, b, b' and c.</text>
</comment>
<comment type="subcellular location">
    <subcellularLocation>
        <location evidence="2">Plastid</location>
        <location evidence="2">Chloroplast thylakoid membrane</location>
        <topology evidence="2">Peripheral membrane protein</topology>
    </subcellularLocation>
</comment>
<comment type="similarity">
    <text evidence="2">Belongs to the ATPase alpha/beta chains family.</text>
</comment>
<sequence>MVTIRADEISNIIRERIEQYNREVTIVNTGTVLQVGDGIARIYGLDEVMAGELVEFAEGTIGIALNLESNNVGVVLMGDGLMIQEGSSVKATGKIAQIPVSEAYLGRVINALANPIDGRGKISASESRLIESPAPGIISRRSVYEPLQTGLIAIDSMIPIGRGQRELIIGDRQTGKTAVATDTILNQQGQNVICVYVAIGQKASSVAQVVTSLQERGAMEYTIVVAETADSPATLQYLAPYTGAALAEYFMYREQHTLIIYDDLSKQAQAYRQMSLLLRRPPGREAYPGDVFYLHSRLLERAAKLSSQLGEGSMTALPIVETQSGDVSAYIPTNVISITDGQIFLSADLFNAGIRPAINVGISVSRVGSAAQIKAMKQVAGKLKLELAQFAELEAFAQFSSDLDKATQNQLARGQRLRELLKQSQSAPLTVEEQIMTIYTGTNGYLDGLEIGQVRKFLVQLRTYLKTNKPQFQEIIASTKTLTAEAESFLKEGIQEQLERFLLQEKL</sequence>
<name>ATPA_CRUWA</name>
<proteinExistence type="inferred from homology"/>
<reference key="1">
    <citation type="submission" date="2007-03" db="EMBL/GenBank/DDBJ databases">
        <title>Sequencing analysis of Crucihimalaya wallichii chloroplast DNA.</title>
        <authorList>
            <person name="Hosouchi T."/>
            <person name="Tsuruoka H."/>
            <person name="Kotani H."/>
        </authorList>
    </citation>
    <scope>NUCLEOTIDE SEQUENCE [LARGE SCALE GENOMIC DNA]</scope>
</reference>
<keyword id="KW-0066">ATP synthesis</keyword>
<keyword id="KW-0067">ATP-binding</keyword>
<keyword id="KW-0139">CF(1)</keyword>
<keyword id="KW-0150">Chloroplast</keyword>
<keyword id="KW-0375">Hydrogen ion transport</keyword>
<keyword id="KW-0406">Ion transport</keyword>
<keyword id="KW-0472">Membrane</keyword>
<keyword id="KW-0547">Nucleotide-binding</keyword>
<keyword id="KW-0597">Phosphoprotein</keyword>
<keyword id="KW-0934">Plastid</keyword>
<keyword id="KW-0793">Thylakoid</keyword>
<keyword id="KW-1278">Translocase</keyword>
<keyword id="KW-0813">Transport</keyword>
<gene>
    <name evidence="2" type="primary">atpA</name>
</gene>